<feature type="chain" id="PRO_0000299206" description="Phosphoprotein">
    <location>
        <begin position="1"/>
        <end position="286"/>
    </location>
</feature>
<accession>Q9JGU0</accession>
<evidence type="ECO:0000250" key="1"/>
<gene>
    <name type="primary">P</name>
</gene>
<reference key="1">
    <citation type="journal article" date="2000" name="Arch. Virol.">
        <title>Complete nucleotide sequence of Northern cereal mosaic virus and its genome organization.</title>
        <authorList>
            <person name="Tanno F."/>
            <person name="Nakatsu A."/>
            <person name="Toriyama S."/>
            <person name="Kojima M."/>
        </authorList>
    </citation>
    <scope>NUCLEOTIDE SEQUENCE [GENOMIC RNA]</scope>
</reference>
<comment type="function">
    <text evidence="1">Non catalytic polymerase cofactor and regulatory protein that plays a role in viral transcription and replication. Stabilizes the RNA polymerase L to the N-RNA template and binds the soluble protein N, preventing it from encapsidating non-genomic RNA (By similarity).</text>
</comment>
<comment type="subunit">
    <text evidence="1">Homotrimer when phosphorylated. This trimer is stabilized by binding to the L protein. Binds soluble protein N, and ribonucleocapsid (By similarity).</text>
</comment>
<comment type="subcellular location">
    <subcellularLocation>
        <location>Virion</location>
    </subcellularLocation>
    <subcellularLocation>
        <location evidence="1">Host cytoplasm</location>
    </subcellularLocation>
</comment>
<comment type="PTM">
    <text evidence="1">Phosphorylated by host kinases.</text>
</comment>
<dbReference type="EMBL" id="AB030277">
    <property type="protein sequence ID" value="BAA95345.1"/>
    <property type="molecule type" value="Genomic_RNA"/>
</dbReference>
<dbReference type="RefSeq" id="NP_057955.1">
    <property type="nucleotide sequence ID" value="NC_002251.1"/>
</dbReference>
<dbReference type="SMR" id="Q9JGU0"/>
<dbReference type="GeneID" id="1457725"/>
<dbReference type="KEGG" id="vg:1457725"/>
<dbReference type="OrthoDB" id="32538at10239"/>
<dbReference type="Proteomes" id="UP000007785">
    <property type="component" value="Genome"/>
</dbReference>
<dbReference type="GO" id="GO:0030430">
    <property type="term" value="C:host cell cytoplasm"/>
    <property type="evidence" value="ECO:0007669"/>
    <property type="project" value="UniProtKB-SubCell"/>
</dbReference>
<dbReference type="GO" id="GO:0044423">
    <property type="term" value="C:virion component"/>
    <property type="evidence" value="ECO:0007669"/>
    <property type="project" value="UniProtKB-KW"/>
</dbReference>
<proteinExistence type="inferred from homology"/>
<keyword id="KW-0143">Chaperone</keyword>
<keyword id="KW-1035">Host cytoplasm</keyword>
<keyword id="KW-0597">Phosphoprotein</keyword>
<keyword id="KW-1185">Reference proteome</keyword>
<keyword id="KW-0693">Viral RNA replication</keyword>
<keyword id="KW-0946">Virion</keyword>
<name>PHOSP_NCMV</name>
<sequence length="286" mass="32174">MDKKASGISGENALFGDVPNDVVGTTYEMGLDGIFDDGETDVIESPADAEEHVTTDIVADEGDNLITKVDDMIGYLKRECQDHGIAVRKEWVNVLTRKFHMSKKIYASHLDFFLLGVMGERHVAVEKDFKDTAVRLSDEVNKMSGISKKVADNETRMIKELDAKMKEMGSLIGKFNGVLNEFKGSMAVSSRPASVASWALDQTTETSREKNYNEFLKKLGFQDHHIKSPLMKKCTVMITDEMYDEVMLENTSEDTLGIYKEQIITYGQSIQKKVEKPIKKDPYADF</sequence>
<organismHost>
    <name type="scientific">Hordeum vulgare</name>
    <name type="common">Barley</name>
    <dbReference type="NCBI Taxonomy" id="4513"/>
</organismHost>
<organism>
    <name type="scientific">Northern cereal mosaic virus</name>
    <name type="common">NCMV</name>
    <dbReference type="NCBI Taxonomy" id="1985704"/>
    <lineage>
        <taxon>Viruses</taxon>
        <taxon>Riboviria</taxon>
        <taxon>Orthornavirae</taxon>
        <taxon>Negarnaviricota</taxon>
        <taxon>Haploviricotina</taxon>
        <taxon>Monjiviricetes</taxon>
        <taxon>Mononegavirales</taxon>
        <taxon>Rhabdoviridae</taxon>
        <taxon>Betarhabdovirinae</taxon>
        <taxon>Cytorhabdovirus</taxon>
    </lineage>
</organism>
<protein>
    <recommendedName>
        <fullName>Phosphoprotein</fullName>
        <shortName>Protein P</shortName>
    </recommendedName>
    <alternativeName>
        <fullName>Protein M1</fullName>
    </alternativeName>
</protein>